<protein>
    <recommendedName>
        <fullName evidence="8">Ras GTPase-activating protein raskol</fullName>
    </recommendedName>
</protein>
<dbReference type="EMBL" id="AE014298">
    <property type="protein sequence ID" value="AAF48759.2"/>
    <property type="molecule type" value="Genomic_DNA"/>
</dbReference>
<dbReference type="EMBL" id="AE014298">
    <property type="protein sequence ID" value="ABW09442.1"/>
    <property type="molecule type" value="Genomic_DNA"/>
</dbReference>
<dbReference type="EMBL" id="AY058706">
    <property type="protein sequence ID" value="AAL13935.1"/>
    <property type="molecule type" value="mRNA"/>
</dbReference>
<dbReference type="EMBL" id="AY089290">
    <property type="protein sequence ID" value="AAL90028.1"/>
    <property type="status" value="ALT_INIT"/>
    <property type="molecule type" value="mRNA"/>
</dbReference>
<dbReference type="RefSeq" id="NP_001097012.1">
    <molecule id="Q8T498-1"/>
    <property type="nucleotide sequence ID" value="NM_001103542.4"/>
</dbReference>
<dbReference type="RefSeq" id="NP_573240.1">
    <molecule id="Q8T498-2"/>
    <property type="nucleotide sequence ID" value="NM_133012.5"/>
</dbReference>
<dbReference type="SMR" id="Q8T498"/>
<dbReference type="BioGRID" id="59077">
    <property type="interactions" value="7"/>
</dbReference>
<dbReference type="DIP" id="DIP-19744N"/>
<dbReference type="FunCoup" id="Q8T498">
    <property type="interactions" value="251"/>
</dbReference>
<dbReference type="IntAct" id="Q8T498">
    <property type="interactions" value="6"/>
</dbReference>
<dbReference type="STRING" id="7227.FBpp0309496"/>
<dbReference type="iPTMnet" id="Q8T498"/>
<dbReference type="PaxDb" id="7227-FBpp0291973"/>
<dbReference type="DNASU" id="32754"/>
<dbReference type="EnsemblMetazoa" id="FBtr0302834">
    <molecule id="Q8T498-2"/>
    <property type="protein sequence ID" value="FBpp0291974"/>
    <property type="gene ID" value="FBgn0261570"/>
</dbReference>
<dbReference type="EnsemblMetazoa" id="FBtr0302835">
    <molecule id="Q8T498-1"/>
    <property type="protein sequence ID" value="FBpp0291975"/>
    <property type="gene ID" value="FBgn0261570"/>
</dbReference>
<dbReference type="GeneID" id="32754"/>
<dbReference type="KEGG" id="dme:Dmel_CG42684"/>
<dbReference type="UCSC" id="CG42270-RB">
    <molecule id="Q8T498-1"/>
    <property type="organism name" value="d. melanogaster"/>
</dbReference>
<dbReference type="AGR" id="FB:FBgn0261570"/>
<dbReference type="CTD" id="32754"/>
<dbReference type="FlyBase" id="FBgn0261570">
    <property type="gene designation" value="raskol"/>
</dbReference>
<dbReference type="VEuPathDB" id="VectorBase:FBgn0261570"/>
<dbReference type="eggNOG" id="KOG3508">
    <property type="taxonomic scope" value="Eukaryota"/>
</dbReference>
<dbReference type="GeneTree" id="ENSGT00940000172132"/>
<dbReference type="InParanoid" id="Q8T498"/>
<dbReference type="OrthoDB" id="5572587at2759"/>
<dbReference type="Reactome" id="R-DME-5658442">
    <property type="pathway name" value="Regulation of RAS by GAPs"/>
</dbReference>
<dbReference type="BioGRID-ORCS" id="32754">
    <property type="hits" value="0 hits in 3 CRISPR screens"/>
</dbReference>
<dbReference type="ChiTaRS" id="CG42684">
    <property type="organism name" value="fly"/>
</dbReference>
<dbReference type="GenomeRNAi" id="32754"/>
<dbReference type="PRO" id="PR:Q8T498"/>
<dbReference type="Proteomes" id="UP000000803">
    <property type="component" value="Chromosome X"/>
</dbReference>
<dbReference type="Bgee" id="FBgn0261570">
    <property type="expression patterns" value="Expressed in dorsal appendage forming follicle cell in ovary and 276 other cell types or tissues"/>
</dbReference>
<dbReference type="ExpressionAtlas" id="Q8T498">
    <property type="expression patterns" value="baseline and differential"/>
</dbReference>
<dbReference type="GO" id="GO:0045179">
    <property type="term" value="C:apical cortex"/>
    <property type="evidence" value="ECO:0007005"/>
    <property type="project" value="FlyBase"/>
</dbReference>
<dbReference type="GO" id="GO:0016324">
    <property type="term" value="C:apical plasma membrane"/>
    <property type="evidence" value="ECO:0007669"/>
    <property type="project" value="UniProtKB-SubCell"/>
</dbReference>
<dbReference type="GO" id="GO:0005096">
    <property type="term" value="F:GTPase activator activity"/>
    <property type="evidence" value="ECO:0007669"/>
    <property type="project" value="UniProtKB-KW"/>
</dbReference>
<dbReference type="GO" id="GO:0046580">
    <property type="term" value="P:negative regulation of Ras protein signal transduction"/>
    <property type="evidence" value="ECO:0000250"/>
    <property type="project" value="UniProtKB"/>
</dbReference>
<dbReference type="CDD" id="cd04013">
    <property type="entry name" value="C2_SynGAP_like"/>
    <property type="match status" value="1"/>
</dbReference>
<dbReference type="CDD" id="cd13262">
    <property type="entry name" value="PH_RasSynGAP-like"/>
    <property type="match status" value="1"/>
</dbReference>
<dbReference type="CDD" id="cd05136">
    <property type="entry name" value="RasGAP_DAB2IP"/>
    <property type="match status" value="1"/>
</dbReference>
<dbReference type="FunFam" id="1.10.506.10:FF:000030">
    <property type="entry name" value="probable Ras GTPase-activating protein isoform X8"/>
    <property type="match status" value="1"/>
</dbReference>
<dbReference type="Gene3D" id="2.60.40.150">
    <property type="entry name" value="C2 domain"/>
    <property type="match status" value="1"/>
</dbReference>
<dbReference type="Gene3D" id="1.10.506.10">
    <property type="entry name" value="GTPase Activation - p120gap, domain 1"/>
    <property type="match status" value="2"/>
</dbReference>
<dbReference type="InterPro" id="IPR000008">
    <property type="entry name" value="C2_dom"/>
</dbReference>
<dbReference type="InterPro" id="IPR035892">
    <property type="entry name" value="C2_domain_sf"/>
</dbReference>
<dbReference type="InterPro" id="IPR021887">
    <property type="entry name" value="DAB2P_C"/>
</dbReference>
<dbReference type="InterPro" id="IPR039360">
    <property type="entry name" value="Ras_GTPase"/>
</dbReference>
<dbReference type="InterPro" id="IPR023152">
    <property type="entry name" value="RasGAP_CS"/>
</dbReference>
<dbReference type="InterPro" id="IPR001936">
    <property type="entry name" value="RasGAP_dom"/>
</dbReference>
<dbReference type="InterPro" id="IPR008936">
    <property type="entry name" value="Rho_GTPase_activation_prot"/>
</dbReference>
<dbReference type="PANTHER" id="PTHR10194:SF60">
    <property type="entry name" value="RAS GTPASE-ACTIVATING PROTEIN RASKOL"/>
    <property type="match status" value="1"/>
</dbReference>
<dbReference type="PANTHER" id="PTHR10194">
    <property type="entry name" value="RAS GTPASE-ACTIVATING PROTEINS"/>
    <property type="match status" value="1"/>
</dbReference>
<dbReference type="Pfam" id="PF00168">
    <property type="entry name" value="C2"/>
    <property type="match status" value="1"/>
</dbReference>
<dbReference type="Pfam" id="PF12004">
    <property type="entry name" value="DAB2P_C"/>
    <property type="match status" value="1"/>
</dbReference>
<dbReference type="Pfam" id="PF25321">
    <property type="entry name" value="PH_RASGAP"/>
    <property type="match status" value="1"/>
</dbReference>
<dbReference type="Pfam" id="PF00616">
    <property type="entry name" value="RasGAP"/>
    <property type="match status" value="2"/>
</dbReference>
<dbReference type="SMART" id="SM00239">
    <property type="entry name" value="C2"/>
    <property type="match status" value="1"/>
</dbReference>
<dbReference type="SMART" id="SM00323">
    <property type="entry name" value="RasGAP"/>
    <property type="match status" value="1"/>
</dbReference>
<dbReference type="SUPFAM" id="SSF49562">
    <property type="entry name" value="C2 domain (Calcium/lipid-binding domain, CaLB)"/>
    <property type="match status" value="1"/>
</dbReference>
<dbReference type="SUPFAM" id="SSF48350">
    <property type="entry name" value="GTPase activation domain, GAP"/>
    <property type="match status" value="1"/>
</dbReference>
<dbReference type="SUPFAM" id="SSF50729">
    <property type="entry name" value="PH domain-like"/>
    <property type="match status" value="1"/>
</dbReference>
<dbReference type="PROSITE" id="PS50004">
    <property type="entry name" value="C2"/>
    <property type="match status" value="1"/>
</dbReference>
<dbReference type="PROSITE" id="PS00509">
    <property type="entry name" value="RAS_GTPASE_ACTIV_1"/>
    <property type="match status" value="1"/>
</dbReference>
<dbReference type="PROSITE" id="PS50018">
    <property type="entry name" value="RAS_GTPASE_ACTIV_2"/>
    <property type="match status" value="1"/>
</dbReference>
<gene>
    <name evidence="8" type="primary">raskol</name>
    <name evidence="10" type="ORF">CG42684</name>
</gene>
<comment type="function">
    <text evidence="1 6">GTPase-activating protein, which acts as a negative regulator for some members of the Ras family (By similarity). Probably decreases their signaling activity by stimulating their intrinsic GTPase activity, thereby lowering the levels of the GTP-bound active form (By similarity). Functions with DE-cadherin (shg) to promote embryonic border cell (BC) migration and adhesion by regulating the distribution of actin protrusions in BCs (PubMed:30763317). Promotes shg-mediated adhesion at the BC interfaces and likely maintains BC cluster adhesion during BC detachment from the follicular epithelium and subsequent BC migration (PubMed:30763317). Also required for restricting the development of actin-rich protrusions to the front of migrating BC clusters thus ensuring unidirectional BC migration (PubMed:30763317). Possibly functions by suppressing Rac1 signaling in non-leading BCs, thus limiting its activity to leading BCs where it initiates localized actin cytoskeleton remodeling to produce the polarized protrusions (PubMed:30763317).</text>
</comment>
<comment type="subcellular location">
    <subcellularLocation>
        <location evidence="6">Cytoplasm</location>
    </subcellularLocation>
    <subcellularLocation>
        <location>Cell membrane</location>
        <topology evidence="6">Peripheral membrane protein</topology>
    </subcellularLocation>
    <subcellularLocation>
        <location>Apical cell membrane</location>
        <topology evidence="6">Peripheral membrane protein</topology>
    </subcellularLocation>
    <text evidence="6">In embryos before border cell (BC) delamination and during BC migration (stage 8 and stage 9 egg chambers), colocalizes with E-cad/shg at the cell membranes of BCs and polar cells (PCs), and is enriched at the PC apical membrane. Also colocalizes with shg in the aminoserosa cell contacts and the dorsal most ectodermal cells at the zippering interface. Cytoplasmic levels are higher in PCs compared to BCs.</text>
</comment>
<comment type="alternative products">
    <event type="alternative splicing"/>
    <isoform>
        <id>Q8T498-1</id>
        <name>B</name>
        <sequence type="displayed"/>
    </isoform>
    <isoform>
        <id>Q8T498-2</id>
        <name>A</name>
        <sequence type="described" ref="VSP_036230"/>
    </isoform>
</comment>
<comment type="developmental stage">
    <text evidence="6">Detected in stage 8 and stage 9 egg chambers (at protein level).</text>
</comment>
<comment type="disruption phenotype">
    <text evidence="6">RNAi-mediated knockdown in both the border cells (BCs) and follicle cells (FCs), results in the abnormal distribution of F-actin protrusions which extend from the BC cluster. However, the number of actin protrusions is not significantly affected. RNAi-mediated knockdown in the embryonic polar cells (PCs) results in BC dissociation in 63 percent of egg chambers.</text>
</comment>
<comment type="miscellaneous">
    <text evidence="6">The name 'raskol' means 'to split' in Russian, and is based upon its role in maintaining cell adhesion in the polar and border cells of embryos.</text>
</comment>
<comment type="sequence caution" evidence="9">
    <conflict type="erroneous initiation">
        <sequence resource="EMBL-CDS" id="AAL90028"/>
    </conflict>
</comment>
<evidence type="ECO:0000250" key="1">
    <source>
        <dbReference type="UniProtKB" id="Q8MLZ5"/>
    </source>
</evidence>
<evidence type="ECO:0000255" key="2">
    <source>
        <dbReference type="PROSITE-ProRule" id="PRU00041"/>
    </source>
</evidence>
<evidence type="ECO:0000255" key="3">
    <source>
        <dbReference type="PROSITE-ProRule" id="PRU00167"/>
    </source>
</evidence>
<evidence type="ECO:0000256" key="4">
    <source>
        <dbReference type="SAM" id="MobiDB-lite"/>
    </source>
</evidence>
<evidence type="ECO:0000269" key="5">
    <source>
    </source>
</evidence>
<evidence type="ECO:0000269" key="6">
    <source>
    </source>
</evidence>
<evidence type="ECO:0000303" key="7">
    <source>
    </source>
</evidence>
<evidence type="ECO:0000303" key="8">
    <source>
    </source>
</evidence>
<evidence type="ECO:0000305" key="9"/>
<evidence type="ECO:0000312" key="10">
    <source>
        <dbReference type="FlyBase" id="FBgn0261570"/>
    </source>
</evidence>
<proteinExistence type="evidence at protein level"/>
<keyword id="KW-0025">Alternative splicing</keyword>
<keyword id="KW-1003">Cell membrane</keyword>
<keyword id="KW-0963">Cytoplasm</keyword>
<keyword id="KW-0343">GTPase activation</keyword>
<keyword id="KW-0472">Membrane</keyword>
<keyword id="KW-0597">Phosphoprotein</keyword>
<keyword id="KW-1185">Reference proteome</keyword>
<name>GAP2_DROME</name>
<organism>
    <name type="scientific">Drosophila melanogaster</name>
    <name type="common">Fruit fly</name>
    <dbReference type="NCBI Taxonomy" id="7227"/>
    <lineage>
        <taxon>Eukaryota</taxon>
        <taxon>Metazoa</taxon>
        <taxon>Ecdysozoa</taxon>
        <taxon>Arthropoda</taxon>
        <taxon>Hexapoda</taxon>
        <taxon>Insecta</taxon>
        <taxon>Pterygota</taxon>
        <taxon>Neoptera</taxon>
        <taxon>Endopterygota</taxon>
        <taxon>Diptera</taxon>
        <taxon>Brachycera</taxon>
        <taxon>Muscomorpha</taxon>
        <taxon>Ephydroidea</taxon>
        <taxon>Drosophilidae</taxon>
        <taxon>Drosophila</taxon>
        <taxon>Sophophora</taxon>
    </lineage>
</organism>
<reference key="1">
    <citation type="journal article" date="2000" name="Science">
        <title>The genome sequence of Drosophila melanogaster.</title>
        <authorList>
            <person name="Adams M.D."/>
            <person name="Celniker S.E."/>
            <person name="Holt R.A."/>
            <person name="Evans C.A."/>
            <person name="Gocayne J.D."/>
            <person name="Amanatides P.G."/>
            <person name="Scherer S.E."/>
            <person name="Li P.W."/>
            <person name="Hoskins R.A."/>
            <person name="Galle R.F."/>
            <person name="George R.A."/>
            <person name="Lewis S.E."/>
            <person name="Richards S."/>
            <person name="Ashburner M."/>
            <person name="Henderson S.N."/>
            <person name="Sutton G.G."/>
            <person name="Wortman J.R."/>
            <person name="Yandell M.D."/>
            <person name="Zhang Q."/>
            <person name="Chen L.X."/>
            <person name="Brandon R.C."/>
            <person name="Rogers Y.-H.C."/>
            <person name="Blazej R.G."/>
            <person name="Champe M."/>
            <person name="Pfeiffer B.D."/>
            <person name="Wan K.H."/>
            <person name="Doyle C."/>
            <person name="Baxter E.G."/>
            <person name="Helt G."/>
            <person name="Nelson C.R."/>
            <person name="Miklos G.L.G."/>
            <person name="Abril J.F."/>
            <person name="Agbayani A."/>
            <person name="An H.-J."/>
            <person name="Andrews-Pfannkoch C."/>
            <person name="Baldwin D."/>
            <person name="Ballew R.M."/>
            <person name="Basu A."/>
            <person name="Baxendale J."/>
            <person name="Bayraktaroglu L."/>
            <person name="Beasley E.M."/>
            <person name="Beeson K.Y."/>
            <person name="Benos P.V."/>
            <person name="Berman B.P."/>
            <person name="Bhandari D."/>
            <person name="Bolshakov S."/>
            <person name="Borkova D."/>
            <person name="Botchan M.R."/>
            <person name="Bouck J."/>
            <person name="Brokstein P."/>
            <person name="Brottier P."/>
            <person name="Burtis K.C."/>
            <person name="Busam D.A."/>
            <person name="Butler H."/>
            <person name="Cadieu E."/>
            <person name="Center A."/>
            <person name="Chandra I."/>
            <person name="Cherry J.M."/>
            <person name="Cawley S."/>
            <person name="Dahlke C."/>
            <person name="Davenport L.B."/>
            <person name="Davies P."/>
            <person name="de Pablos B."/>
            <person name="Delcher A."/>
            <person name="Deng Z."/>
            <person name="Mays A.D."/>
            <person name="Dew I."/>
            <person name="Dietz S.M."/>
            <person name="Dodson K."/>
            <person name="Doup L.E."/>
            <person name="Downes M."/>
            <person name="Dugan-Rocha S."/>
            <person name="Dunkov B.C."/>
            <person name="Dunn P."/>
            <person name="Durbin K.J."/>
            <person name="Evangelista C.C."/>
            <person name="Ferraz C."/>
            <person name="Ferriera S."/>
            <person name="Fleischmann W."/>
            <person name="Fosler C."/>
            <person name="Gabrielian A.E."/>
            <person name="Garg N.S."/>
            <person name="Gelbart W.M."/>
            <person name="Glasser K."/>
            <person name="Glodek A."/>
            <person name="Gong F."/>
            <person name="Gorrell J.H."/>
            <person name="Gu Z."/>
            <person name="Guan P."/>
            <person name="Harris M."/>
            <person name="Harris N.L."/>
            <person name="Harvey D.A."/>
            <person name="Heiman T.J."/>
            <person name="Hernandez J.R."/>
            <person name="Houck J."/>
            <person name="Hostin D."/>
            <person name="Houston K.A."/>
            <person name="Howland T.J."/>
            <person name="Wei M.-H."/>
            <person name="Ibegwam C."/>
            <person name="Jalali M."/>
            <person name="Kalush F."/>
            <person name="Karpen G.H."/>
            <person name="Ke Z."/>
            <person name="Kennison J.A."/>
            <person name="Ketchum K.A."/>
            <person name="Kimmel B.E."/>
            <person name="Kodira C.D."/>
            <person name="Kraft C.L."/>
            <person name="Kravitz S."/>
            <person name="Kulp D."/>
            <person name="Lai Z."/>
            <person name="Lasko P."/>
            <person name="Lei Y."/>
            <person name="Levitsky A.A."/>
            <person name="Li J.H."/>
            <person name="Li Z."/>
            <person name="Liang Y."/>
            <person name="Lin X."/>
            <person name="Liu X."/>
            <person name="Mattei B."/>
            <person name="McIntosh T.C."/>
            <person name="McLeod M.P."/>
            <person name="McPherson D."/>
            <person name="Merkulov G."/>
            <person name="Milshina N.V."/>
            <person name="Mobarry C."/>
            <person name="Morris J."/>
            <person name="Moshrefi A."/>
            <person name="Mount S.M."/>
            <person name="Moy M."/>
            <person name="Murphy B."/>
            <person name="Murphy L."/>
            <person name="Muzny D.M."/>
            <person name="Nelson D.L."/>
            <person name="Nelson D.R."/>
            <person name="Nelson K.A."/>
            <person name="Nixon K."/>
            <person name="Nusskern D.R."/>
            <person name="Pacleb J.M."/>
            <person name="Palazzolo M."/>
            <person name="Pittman G.S."/>
            <person name="Pan S."/>
            <person name="Pollard J."/>
            <person name="Puri V."/>
            <person name="Reese M.G."/>
            <person name="Reinert K."/>
            <person name="Remington K."/>
            <person name="Saunders R.D.C."/>
            <person name="Scheeler F."/>
            <person name="Shen H."/>
            <person name="Shue B.C."/>
            <person name="Siden-Kiamos I."/>
            <person name="Simpson M."/>
            <person name="Skupski M.P."/>
            <person name="Smith T.J."/>
            <person name="Spier E."/>
            <person name="Spradling A.C."/>
            <person name="Stapleton M."/>
            <person name="Strong R."/>
            <person name="Sun E."/>
            <person name="Svirskas R."/>
            <person name="Tector C."/>
            <person name="Turner R."/>
            <person name="Venter E."/>
            <person name="Wang A.H."/>
            <person name="Wang X."/>
            <person name="Wang Z.-Y."/>
            <person name="Wassarman D.A."/>
            <person name="Weinstock G.M."/>
            <person name="Weissenbach J."/>
            <person name="Williams S.M."/>
            <person name="Woodage T."/>
            <person name="Worley K.C."/>
            <person name="Wu D."/>
            <person name="Yang S."/>
            <person name="Yao Q.A."/>
            <person name="Ye J."/>
            <person name="Yeh R.-F."/>
            <person name="Zaveri J.S."/>
            <person name="Zhan M."/>
            <person name="Zhang G."/>
            <person name="Zhao Q."/>
            <person name="Zheng L."/>
            <person name="Zheng X.H."/>
            <person name="Zhong F.N."/>
            <person name="Zhong W."/>
            <person name="Zhou X."/>
            <person name="Zhu S.C."/>
            <person name="Zhu X."/>
            <person name="Smith H.O."/>
            <person name="Gibbs R.A."/>
            <person name="Myers E.W."/>
            <person name="Rubin G.M."/>
            <person name="Venter J.C."/>
        </authorList>
    </citation>
    <scope>NUCLEOTIDE SEQUENCE [LARGE SCALE GENOMIC DNA]</scope>
    <source>
        <strain>Berkeley</strain>
    </source>
</reference>
<reference key="2">
    <citation type="journal article" date="2002" name="Genome Biol.">
        <title>Annotation of the Drosophila melanogaster euchromatic genome: a systematic review.</title>
        <authorList>
            <person name="Misra S."/>
            <person name="Crosby M.A."/>
            <person name="Mungall C.J."/>
            <person name="Matthews B.B."/>
            <person name="Campbell K.S."/>
            <person name="Hradecky P."/>
            <person name="Huang Y."/>
            <person name="Kaminker J.S."/>
            <person name="Millburn G.H."/>
            <person name="Prochnik S.E."/>
            <person name="Smith C.D."/>
            <person name="Tupy J.L."/>
            <person name="Whitfield E.J."/>
            <person name="Bayraktaroglu L."/>
            <person name="Berman B.P."/>
            <person name="Bettencourt B.R."/>
            <person name="Celniker S.E."/>
            <person name="de Grey A.D.N.J."/>
            <person name="Drysdale R.A."/>
            <person name="Harris N.L."/>
            <person name="Richter J."/>
            <person name="Russo S."/>
            <person name="Schroeder A.J."/>
            <person name="Shu S.Q."/>
            <person name="Stapleton M."/>
            <person name="Yamada C."/>
            <person name="Ashburner M."/>
            <person name="Gelbart W.M."/>
            <person name="Rubin G.M."/>
            <person name="Lewis S.E."/>
        </authorList>
    </citation>
    <scope>GENOME REANNOTATION</scope>
    <scope>ALTERNATIVE SPLICING</scope>
    <source>
        <strain>Berkeley</strain>
    </source>
</reference>
<reference key="3">
    <citation type="journal article" date="2002" name="Genome Biol.">
        <title>A Drosophila full-length cDNA resource.</title>
        <authorList>
            <person name="Stapleton M."/>
            <person name="Carlson J.W."/>
            <person name="Brokstein P."/>
            <person name="Yu C."/>
            <person name="Champe M."/>
            <person name="George R.A."/>
            <person name="Guarin H."/>
            <person name="Kronmiller B."/>
            <person name="Pacleb J.M."/>
            <person name="Park S."/>
            <person name="Wan K.H."/>
            <person name="Rubin G.M."/>
            <person name="Celniker S.E."/>
        </authorList>
    </citation>
    <scope>NUCLEOTIDE SEQUENCE [LARGE SCALE MRNA] (ISOFORM A)</scope>
    <source>
        <strain>Berkeley</strain>
        <tissue>Embryo</tissue>
        <tissue>Testis</tissue>
    </source>
</reference>
<reference key="4">
    <citation type="journal article" date="2008" name="J. Proteome Res.">
        <title>Phosphoproteome analysis of Drosophila melanogaster embryos.</title>
        <authorList>
            <person name="Zhai B."/>
            <person name="Villen J."/>
            <person name="Beausoleil S.A."/>
            <person name="Mintseris J."/>
            <person name="Gygi S.P."/>
        </authorList>
    </citation>
    <scope>PHOSPHORYLATION [LARGE SCALE ANALYSIS] AT SER-164; THR-167; SER-221; SER-224; SER-1158; SER-1164; SER-1401 AND SER-1403</scope>
    <scope>IDENTIFICATION BY MASS SPECTROMETRY</scope>
    <source>
        <tissue>Embryo</tissue>
    </source>
</reference>
<reference key="5">
    <citation type="journal article" date="2019" name="PLoS Genet.">
        <title>Evolutionary rate covariation analysis of E-cadherin identifies Raskol as a regulator of cell adhesion and actin dynamics in Drosophila.</title>
        <authorList>
            <person name="Raza Q."/>
            <person name="Choi J.Y."/>
            <person name="Li Y."/>
            <person name="O'Dowd R.M."/>
            <person name="Watkins S.C."/>
            <person name="Chikina M."/>
            <person name="Hong Y."/>
            <person name="Clark N.L."/>
            <person name="Kwiatkowski A.V."/>
        </authorList>
    </citation>
    <scope>FUNCTION</scope>
    <scope>SUBCELLULAR LOCATION</scope>
    <scope>DEVELOPMENTAL STAGE</scope>
    <scope>DISRUPTION PHENOTYPE</scope>
</reference>
<sequence length="1580" mass="173530">MGRRTYLSRSSTISYPSRIEGWLDVCETEGELTRLIKTLPWGPLYCVLQQDDQTFTAYCSEEISLGDVCYEDIPRVRLDRVRRPAKALWDGPPTLVEENEDSDSCVGGSGGMSGINDIVLNTTLYSELGEYKSKTLPRIHFDTALNDTSLNEDTSYEKACRRGSAPTTPILGSKQHQTEHNATSRFTNFFSKKSNPLKRTKSVTKLERTKRGSGGLRGSRSHESLLSSHAVMSTIDLSCTGAVGVAPVHQSVLGRRHCFQVRGGPRGERYYSCGSRQERDLWIYSLRKSIAPNAEHTRRTDNSLKMWVYEAKNLPPKKRYFCELQLDKTLYGRTSVKLQTDLLFWGEHFDFPDIPEINVITVNVFREVDKKKKRDKYQFVGSVKIPVHDVTSRLPCEQWYPILSDKAGDSLGRTSGGGGSGSKDKEQLPTLRIKCRFQSTDILPINVYGNFLTYLKENYKRVCETLEPVIGVKAKEDIGQALVLLMHAQGLAGAFLTDVVALDLLRVGDQRLTFRGNSLATKSMEAFLKLTGEQYLQDTLSAPINELIQSERDCEVDPTKTSGSSAGSLQRQQAALRGAVRGAWQCIFESHKHFPAQLRNCFATFRERLQQLGRQDMADNLISASIFLRFLCPAILSPSLFNITSELPSARATRNLTLVAKTLQTLANFTRFQGKENFMEFLNDFLEQEAARMQQFLEIISTRPEHPAPDSILDWAGYIDQGKQLSILHSLLSESLAKLPEARQHELDPLQHILDEISRAKEHGMGTALPGGYLPATSSTHSIASENQENRNPGSSGSHAGSNSEQLLPQQSQLAQPQHAIVSKPLSAERGIMRGVLTPNSLEKNIFRYNDPTVNGLLQQQQQQQQQQQQQQQQHQQLQQHGHQQQPHHQHPLQMLSNSQTSIAGNQYMSSPGGLQHAQSQTSMASSSLNGSSSNLLHGHQQHAHHPQQLHPHHCPPAPQTSASSTMERMDRMNYPYMSHNGNDYETSTPSSTRSRTLPRNGNPNANGNVGSSNNNQSGSYDDMHGEFQIQISGFDTSSAFVCKSPTPMMKSSLGPAGAGRSHHKLNLGIPDHSGGYVRGNNLNPNSNMPKNLEDLDDLFKYAEEHDVAEPANHHNHNQGQQNHQGHLKPAAVPGKEQLSAKSSHCSSGYQSISTNPSPSQSSSPVESQLKAAMGSHNAPLAFKNPSYQLQPQTGSSRSSAQSNTHQQQQQQQQQQFGSRLKPIGGGLVAARAAFLNSGGALEAATLTPSSSDEQLSADNYFSYAAAAAAGAGIATKLEAQRSLSGGSSSSTSASASTSNLGKSGGSSAYGRLNGPLKREDVYGSGYGGSSGNVGYGLSTSSAAGHHQHPHQQQQNPMQQQQQRERDQEHKQYAGSVAGSVGSATSAAQRRLSLDSARTLSDSSTDTEGHCNQLQEGKRRRQLRSSGGSGGGGAGSEQGLGKSYDQNGEIQLLQQTLDTLCHTLDRDEAELRDSSDELFGLQRPAGSNGSNNLSLQSESTMRSIIDRLITMEEELRREQLKMSLALSHKQRVIEEQGQQIAALDAANSRLLSALTALRQRYETQQQQQQHQAPPKTQKPQ</sequence>
<feature type="chain" id="PRO_0000056662" description="Ras GTPase-activating protein raskol">
    <location>
        <begin position="1"/>
        <end position="1580"/>
    </location>
</feature>
<feature type="domain" description="PH">
    <location>
        <begin position="233"/>
        <end position="291"/>
    </location>
</feature>
<feature type="domain" description="C2" evidence="2">
    <location>
        <begin position="282"/>
        <end position="400"/>
    </location>
</feature>
<feature type="domain" description="Ras-GAP" evidence="3">
    <location>
        <begin position="490"/>
        <end position="700"/>
    </location>
</feature>
<feature type="region of interest" description="Disordered" evidence="4">
    <location>
        <begin position="197"/>
        <end position="223"/>
    </location>
</feature>
<feature type="region of interest" description="Disordered" evidence="4">
    <location>
        <begin position="764"/>
        <end position="819"/>
    </location>
</feature>
<feature type="region of interest" description="Disordered" evidence="4">
    <location>
        <begin position="857"/>
        <end position="892"/>
    </location>
</feature>
<feature type="region of interest" description="Disordered" evidence="4">
    <location>
        <begin position="904"/>
        <end position="1023"/>
    </location>
</feature>
<feature type="region of interest" description="Disordered" evidence="4">
    <location>
        <begin position="1112"/>
        <end position="1218"/>
    </location>
</feature>
<feature type="region of interest" description="Disordered" evidence="4">
    <location>
        <begin position="1284"/>
        <end position="1313"/>
    </location>
</feature>
<feature type="region of interest" description="Disordered" evidence="4">
    <location>
        <begin position="1334"/>
        <end position="1443"/>
    </location>
</feature>
<feature type="region of interest" description="Disordered" evidence="4">
    <location>
        <begin position="1561"/>
        <end position="1580"/>
    </location>
</feature>
<feature type="compositionally biased region" description="Polar residues" evidence="4">
    <location>
        <begin position="776"/>
        <end position="805"/>
    </location>
</feature>
<feature type="compositionally biased region" description="Low complexity" evidence="4">
    <location>
        <begin position="806"/>
        <end position="818"/>
    </location>
</feature>
<feature type="compositionally biased region" description="Low complexity" evidence="4">
    <location>
        <begin position="857"/>
        <end position="885"/>
    </location>
</feature>
<feature type="compositionally biased region" description="Low complexity" evidence="4">
    <location>
        <begin position="926"/>
        <end position="939"/>
    </location>
</feature>
<feature type="compositionally biased region" description="Basic residues" evidence="4">
    <location>
        <begin position="940"/>
        <end position="954"/>
    </location>
</feature>
<feature type="compositionally biased region" description="Low complexity" evidence="4">
    <location>
        <begin position="987"/>
        <end position="1020"/>
    </location>
</feature>
<feature type="compositionally biased region" description="Polar residues" evidence="4">
    <location>
        <begin position="1140"/>
        <end position="1150"/>
    </location>
</feature>
<feature type="compositionally biased region" description="Low complexity" evidence="4">
    <location>
        <begin position="1151"/>
        <end position="1169"/>
    </location>
</feature>
<feature type="compositionally biased region" description="Polar residues" evidence="4">
    <location>
        <begin position="1186"/>
        <end position="1206"/>
    </location>
</feature>
<feature type="compositionally biased region" description="Low complexity" evidence="4">
    <location>
        <begin position="1207"/>
        <end position="1216"/>
    </location>
</feature>
<feature type="compositionally biased region" description="Low complexity" evidence="4">
    <location>
        <begin position="1285"/>
        <end position="1299"/>
    </location>
</feature>
<feature type="compositionally biased region" description="Low complexity" evidence="4">
    <location>
        <begin position="1351"/>
        <end position="1362"/>
    </location>
</feature>
<feature type="compositionally biased region" description="Basic and acidic residues" evidence="4">
    <location>
        <begin position="1363"/>
        <end position="1372"/>
    </location>
</feature>
<feature type="compositionally biased region" description="Low complexity" evidence="4">
    <location>
        <begin position="1374"/>
        <end position="1388"/>
    </location>
</feature>
<feature type="compositionally biased region" description="Polar residues" evidence="4">
    <location>
        <begin position="1396"/>
        <end position="1415"/>
    </location>
</feature>
<feature type="compositionally biased region" description="Gly residues" evidence="4">
    <location>
        <begin position="1427"/>
        <end position="1438"/>
    </location>
</feature>
<feature type="compositionally biased region" description="Low complexity" evidence="4">
    <location>
        <begin position="1563"/>
        <end position="1580"/>
    </location>
</feature>
<feature type="site" description="Arginine finger; crucial for GTP hydrolysis by stabilizing the transition state" evidence="3">
    <location>
        <position position="515"/>
    </location>
</feature>
<feature type="modified residue" description="Phosphoserine" evidence="5">
    <location>
        <position position="164"/>
    </location>
</feature>
<feature type="modified residue" description="Phosphothreonine" evidence="5">
    <location>
        <position position="167"/>
    </location>
</feature>
<feature type="modified residue" description="Phosphoserine" evidence="5">
    <location>
        <position position="221"/>
    </location>
</feature>
<feature type="modified residue" description="Phosphoserine" evidence="5">
    <location>
        <position position="224"/>
    </location>
</feature>
<feature type="modified residue" description="Phosphoserine" evidence="5">
    <location>
        <position position="1158"/>
    </location>
</feature>
<feature type="modified residue" description="Phosphoserine" evidence="5">
    <location>
        <position position="1164"/>
    </location>
</feature>
<feature type="modified residue" description="Phosphoserine" evidence="5">
    <location>
        <position position="1401"/>
    </location>
</feature>
<feature type="modified residue" description="Phosphoserine" evidence="5">
    <location>
        <position position="1403"/>
    </location>
</feature>
<feature type="splice variant" id="VSP_036230" description="In isoform A." evidence="7">
    <location>
        <begin position="129"/>
        <end position="152"/>
    </location>
</feature>
<feature type="sequence conflict" description="In Ref. 3; AAL90028." evidence="9" ref="3">
    <original>H</original>
    <variation>P</variation>
    <location>
        <position position="1370"/>
    </location>
</feature>
<accession>Q8T498</accession>
<accession>A8JV42</accession>
<accession>Q95TL0</accession>
<accession>Q9VX23</accession>